<gene>
    <name type="primary">DAZL</name>
    <name type="synonym">DAZL1</name>
    <name type="synonym">DAZLA</name>
</gene>
<comment type="function">
    <text evidence="1">RNA-binding protein, which is essential for gametogenesis in both males and females. Plays a central role during spermatogenesis. Acts by binding to the 3'-UTR of mRNA, specifically recognizing GUU triplets, and thereby regulating the translation of key transcripts (By similarity).</text>
</comment>
<comment type="subunit">
    <text evidence="1">Homodimer and heterodimer. Forms a heterodimer with DAZ. Interacts with BOLL, DAZAP1 and DAZAP2. Interacts with PUM2 Multiple DAZL RRMs can bind to a single RNA containing multiple GUU triplets (By similarity).</text>
</comment>
<comment type="subcellular location">
    <subcellularLocation>
        <location evidence="3">Cytoplasm</location>
    </subcellularLocation>
    <subcellularLocation>
        <location evidence="1">Nucleus</location>
    </subcellularLocation>
    <text evidence="1">Predominantly cytoplasmic. Nuclear in spermatogonia until near the end of the meiotic prophase and cytoplasmic localization from then onward.</text>
</comment>
<comment type="tissue specificity">
    <text evidence="7">Testis specific.</text>
</comment>
<comment type="domain">
    <text evidence="1">The DAZ domain mediates the interaction with DAZAP1 and DAZAP2.</text>
</comment>
<comment type="similarity">
    <text evidence="5">Belongs to the RRM DAZ family.</text>
</comment>
<name>DAZL_MACFA</name>
<proteinExistence type="evidence at transcript level"/>
<sequence>MSAANPETPNSTISREASTQSSSAAASQGYVLPEGKIMPNTVFVGGIDVRMDETEIRSFFARYGSVKEVKIITDRTGVSKGYGFVSFFNDVDVQKIVESQINFHGKKLKLGPAIRKQNLCAYHVQPRPLVFNHPPPPQFQNVWTNPNTETYMQPPTTMNPITQYVQAYPTYPNSPVQVITGYQLPVYNYQMPPQWPVGEQRSYVVPPAYSAVNYHCNEVDPGAEVVPNECSVHEATPPSGNGPQKKSVDRSIQTVVSCLFNPENRLRNTVVTQDDYFKDKRVHHFRRSRAMLKSV</sequence>
<feature type="chain" id="PRO_0000081560" description="Deleted in azoospermia-like">
    <location>
        <begin position="1"/>
        <end position="295"/>
    </location>
</feature>
<feature type="domain" description="RRM" evidence="4">
    <location>
        <begin position="40"/>
        <end position="115"/>
    </location>
</feature>
<feature type="domain" description="DAZ" evidence="5">
    <location>
        <begin position="167"/>
        <end position="190"/>
    </location>
</feature>
<feature type="region of interest" description="Disordered" evidence="6">
    <location>
        <begin position="1"/>
        <end position="25"/>
    </location>
</feature>
<feature type="region of interest" description="Homodimerization" evidence="1">
    <location>
        <begin position="80"/>
        <end position="132"/>
    </location>
</feature>
<feature type="compositionally biased region" description="Polar residues" evidence="6">
    <location>
        <begin position="1"/>
        <end position="10"/>
    </location>
</feature>
<feature type="compositionally biased region" description="Low complexity" evidence="6">
    <location>
        <begin position="11"/>
        <end position="25"/>
    </location>
</feature>
<feature type="modified residue" description="Phosphotyrosine" evidence="2">
    <location>
        <position position="276"/>
    </location>
</feature>
<feature type="sequence conflict" description="In Ref. 1; CAA68233." evidence="8" ref="1">
    <original>S</original>
    <variation>I</variation>
    <location>
        <position position="288"/>
    </location>
</feature>
<keyword id="KW-0963">Cytoplasm</keyword>
<keyword id="KW-0217">Developmental protein</keyword>
<keyword id="KW-0221">Differentiation</keyword>
<keyword id="KW-0539">Nucleus</keyword>
<keyword id="KW-0597">Phosphoprotein</keyword>
<keyword id="KW-1185">Reference proteome</keyword>
<keyword id="KW-0694">RNA-binding</keyword>
<keyword id="KW-0744">Spermatogenesis</keyword>
<keyword id="KW-0810">Translation regulation</keyword>
<protein>
    <recommendedName>
        <fullName>Deleted in azoospermia-like</fullName>
    </recommendedName>
    <alternativeName>
        <fullName>DAZ-like autosomal</fullName>
    </alternativeName>
    <alternativeName>
        <fullName>Deleted in azoospermia-like 1</fullName>
    </alternativeName>
</protein>
<dbReference type="EMBL" id="X99971">
    <property type="protein sequence ID" value="CAA68233.1"/>
    <property type="molecule type" value="mRNA"/>
</dbReference>
<dbReference type="EMBL" id="AF144132">
    <property type="protein sequence ID" value="AAG50426.1"/>
    <property type="molecule type" value="mRNA"/>
</dbReference>
<dbReference type="RefSeq" id="NP_001270735.1">
    <property type="nucleotide sequence ID" value="NM_001283806.1"/>
</dbReference>
<dbReference type="RefSeq" id="NP_001422456.1">
    <property type="nucleotide sequence ID" value="NM_001435527.1"/>
</dbReference>
<dbReference type="SMR" id="Q95192"/>
<dbReference type="STRING" id="9541.ENSMFAP00000005481"/>
<dbReference type="Ensembl" id="ENSMFAT00000024154.2">
    <property type="protein sequence ID" value="ENSMFAP00000005477.1"/>
    <property type="gene ID" value="ENSMFAG00000002406.2"/>
</dbReference>
<dbReference type="GeneID" id="102121570"/>
<dbReference type="VEuPathDB" id="HostDB:ENSMFAG00000002406"/>
<dbReference type="eggNOG" id="KOG0118">
    <property type="taxonomic scope" value="Eukaryota"/>
</dbReference>
<dbReference type="GeneTree" id="ENSGT00530000063480"/>
<dbReference type="OMA" id="SQEDYFK"/>
<dbReference type="Proteomes" id="UP000233100">
    <property type="component" value="Chromosome 2"/>
</dbReference>
<dbReference type="Bgee" id="ENSMFAG00000002406">
    <property type="expression patterns" value="Expressed in multicellular organism"/>
</dbReference>
<dbReference type="GO" id="GO:0005737">
    <property type="term" value="C:cytoplasm"/>
    <property type="evidence" value="ECO:0000250"/>
    <property type="project" value="UniProtKB"/>
</dbReference>
<dbReference type="GO" id="GO:0005634">
    <property type="term" value="C:nucleus"/>
    <property type="evidence" value="ECO:0007669"/>
    <property type="project" value="UniProtKB-SubCell"/>
</dbReference>
<dbReference type="GO" id="GO:0032991">
    <property type="term" value="C:protein-containing complex"/>
    <property type="evidence" value="ECO:0007669"/>
    <property type="project" value="Ensembl"/>
</dbReference>
<dbReference type="GO" id="GO:0005840">
    <property type="term" value="C:ribosome"/>
    <property type="evidence" value="ECO:0007669"/>
    <property type="project" value="Ensembl"/>
</dbReference>
<dbReference type="GO" id="GO:0042802">
    <property type="term" value="F:identical protein binding"/>
    <property type="evidence" value="ECO:0007669"/>
    <property type="project" value="Ensembl"/>
</dbReference>
<dbReference type="GO" id="GO:0003730">
    <property type="term" value="F:mRNA 3'-UTR binding"/>
    <property type="evidence" value="ECO:0007669"/>
    <property type="project" value="Ensembl"/>
</dbReference>
<dbReference type="GO" id="GO:0008494">
    <property type="term" value="F:translation activator activity"/>
    <property type="evidence" value="ECO:0007669"/>
    <property type="project" value="Ensembl"/>
</dbReference>
<dbReference type="GO" id="GO:0070935">
    <property type="term" value="P:3'-UTR-mediated mRNA stabilization"/>
    <property type="evidence" value="ECO:0007669"/>
    <property type="project" value="TreeGrafter"/>
</dbReference>
<dbReference type="GO" id="GO:0007147">
    <property type="term" value="P:female meiosis II"/>
    <property type="evidence" value="ECO:0007669"/>
    <property type="project" value="Ensembl"/>
</dbReference>
<dbReference type="GO" id="GO:0001556">
    <property type="term" value="P:oocyte maturation"/>
    <property type="evidence" value="ECO:0007669"/>
    <property type="project" value="Ensembl"/>
</dbReference>
<dbReference type="GO" id="GO:0045836">
    <property type="term" value="P:positive regulation of meiotic nuclear division"/>
    <property type="evidence" value="ECO:0007669"/>
    <property type="project" value="Ensembl"/>
</dbReference>
<dbReference type="GO" id="GO:0045948">
    <property type="term" value="P:positive regulation of translational initiation"/>
    <property type="evidence" value="ECO:0007669"/>
    <property type="project" value="Ensembl"/>
</dbReference>
<dbReference type="GO" id="GO:0007283">
    <property type="term" value="P:spermatogenesis"/>
    <property type="evidence" value="ECO:0007669"/>
    <property type="project" value="UniProtKB-KW"/>
</dbReference>
<dbReference type="CDD" id="cd12672">
    <property type="entry name" value="RRM_DAZL"/>
    <property type="match status" value="1"/>
</dbReference>
<dbReference type="FunFam" id="3.30.70.330:FF:000180">
    <property type="entry name" value="Deleted in azoospermia-like"/>
    <property type="match status" value="1"/>
</dbReference>
<dbReference type="Gene3D" id="3.30.70.330">
    <property type="match status" value="1"/>
</dbReference>
<dbReference type="InterPro" id="IPR043628">
    <property type="entry name" value="DAZ_dom"/>
</dbReference>
<dbReference type="InterPro" id="IPR037551">
    <property type="entry name" value="DAZ_RRM_vert"/>
</dbReference>
<dbReference type="InterPro" id="IPR012677">
    <property type="entry name" value="Nucleotide-bd_a/b_plait_sf"/>
</dbReference>
<dbReference type="InterPro" id="IPR035979">
    <property type="entry name" value="RBD_domain_sf"/>
</dbReference>
<dbReference type="InterPro" id="IPR000504">
    <property type="entry name" value="RRM_dom"/>
</dbReference>
<dbReference type="PANTHER" id="PTHR11176">
    <property type="entry name" value="BOULE-RELATED"/>
    <property type="match status" value="1"/>
</dbReference>
<dbReference type="PANTHER" id="PTHR11176:SF4">
    <property type="entry name" value="DELETED IN AZOOSPERMIA-LIKE"/>
    <property type="match status" value="1"/>
</dbReference>
<dbReference type="Pfam" id="PF18872">
    <property type="entry name" value="Daz"/>
    <property type="match status" value="1"/>
</dbReference>
<dbReference type="Pfam" id="PF00076">
    <property type="entry name" value="RRM_1"/>
    <property type="match status" value="1"/>
</dbReference>
<dbReference type="SMART" id="SM00360">
    <property type="entry name" value="RRM"/>
    <property type="match status" value="1"/>
</dbReference>
<dbReference type="SUPFAM" id="SSF54928">
    <property type="entry name" value="RNA-binding domain, RBD"/>
    <property type="match status" value="1"/>
</dbReference>
<dbReference type="PROSITE" id="PS51890">
    <property type="entry name" value="DAZ"/>
    <property type="match status" value="1"/>
</dbReference>
<dbReference type="PROSITE" id="PS50102">
    <property type="entry name" value="RRM"/>
    <property type="match status" value="1"/>
</dbReference>
<accession>Q95192</accession>
<accession>Q9BGN7</accession>
<evidence type="ECO:0000250" key="1"/>
<evidence type="ECO:0000250" key="2">
    <source>
        <dbReference type="UniProtKB" id="Q64368"/>
    </source>
</evidence>
<evidence type="ECO:0000250" key="3">
    <source>
        <dbReference type="UniProtKB" id="Q92904"/>
    </source>
</evidence>
<evidence type="ECO:0000255" key="4">
    <source>
        <dbReference type="PROSITE-ProRule" id="PRU00176"/>
    </source>
</evidence>
<evidence type="ECO:0000255" key="5">
    <source>
        <dbReference type="PROSITE-ProRule" id="PRU01238"/>
    </source>
</evidence>
<evidence type="ECO:0000256" key="6">
    <source>
        <dbReference type="SAM" id="MobiDB-lite"/>
    </source>
</evidence>
<evidence type="ECO:0000269" key="7">
    <source>
    </source>
</evidence>
<evidence type="ECO:0000305" key="8"/>
<organism>
    <name type="scientific">Macaca fascicularis</name>
    <name type="common">Crab-eating macaque</name>
    <name type="synonym">Cynomolgus monkey</name>
    <dbReference type="NCBI Taxonomy" id="9541"/>
    <lineage>
        <taxon>Eukaryota</taxon>
        <taxon>Metazoa</taxon>
        <taxon>Chordata</taxon>
        <taxon>Craniata</taxon>
        <taxon>Vertebrata</taxon>
        <taxon>Euteleostomi</taxon>
        <taxon>Mammalia</taxon>
        <taxon>Eutheria</taxon>
        <taxon>Euarchontoglires</taxon>
        <taxon>Primates</taxon>
        <taxon>Haplorrhini</taxon>
        <taxon>Catarrhini</taxon>
        <taxon>Cercopithecidae</taxon>
        <taxon>Cercopithecinae</taxon>
        <taxon>Macaca</taxon>
    </lineage>
</organism>
<reference key="1">
    <citation type="journal article" date="1997" name="Mol. Hum. Reprod.">
        <title>cynDAZLA: a cynomolgus monkey homologue of the human autosomal DAZ gene.</title>
        <authorList>
            <person name="Carani C."/>
            <person name="Gromoll J."/>
            <person name="Brinkworth M.H."/>
            <person name="Simoni M."/>
            <person name="Weinbauer G.F.W."/>
            <person name="Nieschlag E."/>
        </authorList>
    </citation>
    <scope>NUCLEOTIDE SEQUENCE [MRNA]</scope>
    <scope>TISSUE SPECIFICITY</scope>
    <source>
        <tissue>Testis</tissue>
    </source>
</reference>
<reference key="2">
    <citation type="journal article" date="2000" name="J. Endocrinol. Invest.">
        <title>Conservation of the deleted-in-azoospermia-like-1 (DAZL1) gene structure in old world monkeys points to a homologous function of DAZL1 in this primate class.</title>
        <authorList>
            <person name="Grossmann B."/>
            <person name="Weinbauer G."/>
            <person name="Hirschmann P."/>
            <person name="Vogt P.H."/>
        </authorList>
    </citation>
    <scope>NUCLEOTIDE SEQUENCE [MRNA]</scope>
    <source>
        <tissue>Testis</tissue>
    </source>
</reference>